<evidence type="ECO:0000255" key="1">
    <source>
        <dbReference type="HAMAP-Rule" id="MF_01864"/>
    </source>
</evidence>
<evidence type="ECO:0000255" key="2">
    <source>
        <dbReference type="PROSITE-ProRule" id="PRU01266"/>
    </source>
</evidence>
<evidence type="ECO:0000256" key="3">
    <source>
        <dbReference type="SAM" id="MobiDB-lite"/>
    </source>
</evidence>
<sequence>MTGTSNIPTHGKEHKDAPALLPLPAPNPHHTHAAHPGNPSHDRPPSRGKLFIKTHGCQMNEYDSAKMADVLTTTEALELTDNPEEADIILINTCSIREKAQEKVFSQLGRWRALKTSGRDVIIGVGGCVASQEGEAIVKRAPYVDLVFGPQTLHRLPDMIRARREQNRPQVDIRFPEIEKFDHLPTPRAEGPSAFVSIMEGCSKYCSFCVVPYTRGEEVSRPFEDVLTEIAHLATQGVREINLLGQNVNAYRGAMDPGPSNNTNPAPPPYADLGLLIRAIAQFESIGRIRFTTSHPLEFSDSLVEAYRDVPQLANHLHLPVQSGSDRILSAMKRGYTALEFKSKIRKLRAVRPDISISSDFIIGFPGESDTDFQKTMQLIEDIGFDQSFSFIYSRRPGTPASNLEDHTPDEIKRTRLEHLQKHINTYAADISKRMIGTVQTVLVEGPSKKNPNELTGKTENMRPVNFPGHPRLIGQFIDVHITEALSNSLRGRVHTN</sequence>
<protein>
    <recommendedName>
        <fullName evidence="1">tRNA-2-methylthio-N(6)-dimethylallyladenosine synthase</fullName>
        <ecNumber evidence="1">2.8.4.3</ecNumber>
    </recommendedName>
    <alternativeName>
        <fullName evidence="1">(Dimethylallyl)adenosine tRNA methylthiotransferase MiaB</fullName>
    </alternativeName>
    <alternativeName>
        <fullName evidence="1">tRNA-i(6)A37 methylthiotransferase</fullName>
    </alternativeName>
</protein>
<reference key="1">
    <citation type="journal article" date="2000" name="Nature">
        <title>The genome sequence of the plant pathogen Xylella fastidiosa.</title>
        <authorList>
            <person name="Simpson A.J.G."/>
            <person name="Reinach F.C."/>
            <person name="Arruda P."/>
            <person name="Abreu F.A."/>
            <person name="Acencio M."/>
            <person name="Alvarenga R."/>
            <person name="Alves L.M.C."/>
            <person name="Araya J.E."/>
            <person name="Baia G.S."/>
            <person name="Baptista C.S."/>
            <person name="Barros M.H."/>
            <person name="Bonaccorsi E.D."/>
            <person name="Bordin S."/>
            <person name="Bove J.M."/>
            <person name="Briones M.R.S."/>
            <person name="Bueno M.R.P."/>
            <person name="Camargo A.A."/>
            <person name="Camargo L.E.A."/>
            <person name="Carraro D.M."/>
            <person name="Carrer H."/>
            <person name="Colauto N.B."/>
            <person name="Colombo C."/>
            <person name="Costa F.F."/>
            <person name="Costa M.C.R."/>
            <person name="Costa-Neto C.M."/>
            <person name="Coutinho L.L."/>
            <person name="Cristofani M."/>
            <person name="Dias-Neto E."/>
            <person name="Docena C."/>
            <person name="El-Dorry H."/>
            <person name="Facincani A.P."/>
            <person name="Ferreira A.J.S."/>
            <person name="Ferreira V.C.A."/>
            <person name="Ferro J.A."/>
            <person name="Fraga J.S."/>
            <person name="Franca S.C."/>
            <person name="Franco M.C."/>
            <person name="Frohme M."/>
            <person name="Furlan L.R."/>
            <person name="Garnier M."/>
            <person name="Goldman G.H."/>
            <person name="Goldman M.H.S."/>
            <person name="Gomes S.L."/>
            <person name="Gruber A."/>
            <person name="Ho P.L."/>
            <person name="Hoheisel J.D."/>
            <person name="Junqueira M.L."/>
            <person name="Kemper E.L."/>
            <person name="Kitajima J.P."/>
            <person name="Krieger J.E."/>
            <person name="Kuramae E.E."/>
            <person name="Laigret F."/>
            <person name="Lambais M.R."/>
            <person name="Leite L.C.C."/>
            <person name="Lemos E.G.M."/>
            <person name="Lemos M.V.F."/>
            <person name="Lopes S.A."/>
            <person name="Lopes C.R."/>
            <person name="Machado J.A."/>
            <person name="Machado M.A."/>
            <person name="Madeira A.M.B.N."/>
            <person name="Madeira H.M.F."/>
            <person name="Marino C.L."/>
            <person name="Marques M.V."/>
            <person name="Martins E.A.L."/>
            <person name="Martins E.M.F."/>
            <person name="Matsukuma A.Y."/>
            <person name="Menck C.F.M."/>
            <person name="Miracca E.C."/>
            <person name="Miyaki C.Y."/>
            <person name="Monteiro-Vitorello C.B."/>
            <person name="Moon D.H."/>
            <person name="Nagai M.A."/>
            <person name="Nascimento A.L.T.O."/>
            <person name="Netto L.E.S."/>
            <person name="Nhani A. Jr."/>
            <person name="Nobrega F.G."/>
            <person name="Nunes L.R."/>
            <person name="Oliveira M.A."/>
            <person name="de Oliveira M.C."/>
            <person name="de Oliveira R.C."/>
            <person name="Palmieri D.A."/>
            <person name="Paris A."/>
            <person name="Peixoto B.R."/>
            <person name="Pereira G.A.G."/>
            <person name="Pereira H.A. Jr."/>
            <person name="Pesquero J.B."/>
            <person name="Quaggio R.B."/>
            <person name="Roberto P.G."/>
            <person name="Rodrigues V."/>
            <person name="de Rosa A.J.M."/>
            <person name="de Rosa V.E. Jr."/>
            <person name="de Sa R.G."/>
            <person name="Santelli R.V."/>
            <person name="Sawasaki H.E."/>
            <person name="da Silva A.C.R."/>
            <person name="da Silva A.M."/>
            <person name="da Silva F.R."/>
            <person name="Silva W.A. Jr."/>
            <person name="da Silveira J.F."/>
            <person name="Silvestri M.L.Z."/>
            <person name="Siqueira W.J."/>
            <person name="de Souza A.A."/>
            <person name="de Souza A.P."/>
            <person name="Terenzi M.F."/>
            <person name="Truffi D."/>
            <person name="Tsai S.M."/>
            <person name="Tsuhako M.H."/>
            <person name="Vallada H."/>
            <person name="Van Sluys M.A."/>
            <person name="Verjovski-Almeida S."/>
            <person name="Vettore A.L."/>
            <person name="Zago M.A."/>
            <person name="Zatz M."/>
            <person name="Meidanis J."/>
            <person name="Setubal J.C."/>
        </authorList>
    </citation>
    <scope>NUCLEOTIDE SEQUENCE [LARGE SCALE GENOMIC DNA]</scope>
    <source>
        <strain>9a5c</strain>
    </source>
</reference>
<gene>
    <name evidence="1" type="primary">miaB</name>
    <name type="ordered locus">XF_0906</name>
</gene>
<proteinExistence type="inferred from homology"/>
<organism>
    <name type="scientific">Xylella fastidiosa (strain 9a5c)</name>
    <dbReference type="NCBI Taxonomy" id="160492"/>
    <lineage>
        <taxon>Bacteria</taxon>
        <taxon>Pseudomonadati</taxon>
        <taxon>Pseudomonadota</taxon>
        <taxon>Gammaproteobacteria</taxon>
        <taxon>Lysobacterales</taxon>
        <taxon>Lysobacteraceae</taxon>
        <taxon>Xylella</taxon>
    </lineage>
</organism>
<name>MIAB_XYLFA</name>
<comment type="function">
    <text evidence="1">Catalyzes the methylthiolation of N6-(dimethylallyl)adenosine (i(6)A), leading to the formation of 2-methylthio-N6-(dimethylallyl)adenosine (ms(2)i(6)A) at position 37 in tRNAs that read codons beginning with uridine.</text>
</comment>
<comment type="catalytic activity">
    <reaction evidence="1">
        <text>N(6)-dimethylallyladenosine(37) in tRNA + (sulfur carrier)-SH + AH2 + 2 S-adenosyl-L-methionine = 2-methylsulfanyl-N(6)-dimethylallyladenosine(37) in tRNA + (sulfur carrier)-H + 5'-deoxyadenosine + L-methionine + A + S-adenosyl-L-homocysteine + 2 H(+)</text>
        <dbReference type="Rhea" id="RHEA:37067"/>
        <dbReference type="Rhea" id="RHEA-COMP:10375"/>
        <dbReference type="Rhea" id="RHEA-COMP:10376"/>
        <dbReference type="Rhea" id="RHEA-COMP:14737"/>
        <dbReference type="Rhea" id="RHEA-COMP:14739"/>
        <dbReference type="ChEBI" id="CHEBI:13193"/>
        <dbReference type="ChEBI" id="CHEBI:15378"/>
        <dbReference type="ChEBI" id="CHEBI:17319"/>
        <dbReference type="ChEBI" id="CHEBI:17499"/>
        <dbReference type="ChEBI" id="CHEBI:29917"/>
        <dbReference type="ChEBI" id="CHEBI:57844"/>
        <dbReference type="ChEBI" id="CHEBI:57856"/>
        <dbReference type="ChEBI" id="CHEBI:59789"/>
        <dbReference type="ChEBI" id="CHEBI:64428"/>
        <dbReference type="ChEBI" id="CHEBI:74415"/>
        <dbReference type="ChEBI" id="CHEBI:74417"/>
        <dbReference type="EC" id="2.8.4.3"/>
    </reaction>
</comment>
<comment type="cofactor">
    <cofactor evidence="1">
        <name>[4Fe-4S] cluster</name>
        <dbReference type="ChEBI" id="CHEBI:49883"/>
    </cofactor>
    <text evidence="1">Binds 2 [4Fe-4S] clusters. One cluster is coordinated with 3 cysteines and an exchangeable S-adenosyl-L-methionine.</text>
</comment>
<comment type="subunit">
    <text evidence="1">Monomer.</text>
</comment>
<comment type="subcellular location">
    <subcellularLocation>
        <location evidence="1">Cytoplasm</location>
    </subcellularLocation>
</comment>
<comment type="similarity">
    <text evidence="1">Belongs to the methylthiotransferase family. MiaB subfamily.</text>
</comment>
<dbReference type="EC" id="2.8.4.3" evidence="1"/>
<dbReference type="EMBL" id="AE003849">
    <property type="protein sequence ID" value="AAF83716.1"/>
    <property type="molecule type" value="Genomic_DNA"/>
</dbReference>
<dbReference type="PIR" id="F82747">
    <property type="entry name" value="F82747"/>
</dbReference>
<dbReference type="RefSeq" id="WP_010893426.1">
    <property type="nucleotide sequence ID" value="NC_002488.3"/>
</dbReference>
<dbReference type="SMR" id="Q9PEX2"/>
<dbReference type="STRING" id="160492.XF_0906"/>
<dbReference type="KEGG" id="xfa:XF_0906"/>
<dbReference type="eggNOG" id="COG0621">
    <property type="taxonomic scope" value="Bacteria"/>
</dbReference>
<dbReference type="HOGENOM" id="CLU_018697_2_0_6"/>
<dbReference type="Proteomes" id="UP000000812">
    <property type="component" value="Chromosome"/>
</dbReference>
<dbReference type="GO" id="GO:0005829">
    <property type="term" value="C:cytosol"/>
    <property type="evidence" value="ECO:0007669"/>
    <property type="project" value="TreeGrafter"/>
</dbReference>
<dbReference type="GO" id="GO:0051539">
    <property type="term" value="F:4 iron, 4 sulfur cluster binding"/>
    <property type="evidence" value="ECO:0007669"/>
    <property type="project" value="UniProtKB-UniRule"/>
</dbReference>
<dbReference type="GO" id="GO:0046872">
    <property type="term" value="F:metal ion binding"/>
    <property type="evidence" value="ECO:0007669"/>
    <property type="project" value="UniProtKB-KW"/>
</dbReference>
<dbReference type="GO" id="GO:0035597">
    <property type="term" value="F:N6-isopentenyladenosine methylthiotransferase activity"/>
    <property type="evidence" value="ECO:0007669"/>
    <property type="project" value="TreeGrafter"/>
</dbReference>
<dbReference type="CDD" id="cd01335">
    <property type="entry name" value="Radical_SAM"/>
    <property type="match status" value="1"/>
</dbReference>
<dbReference type="FunFam" id="3.40.50.12160:FF:000001">
    <property type="entry name" value="tRNA-2-methylthio-N(6)-dimethylallyladenosine synthase"/>
    <property type="match status" value="1"/>
</dbReference>
<dbReference type="FunFam" id="3.80.30.20:FF:000001">
    <property type="entry name" value="tRNA-2-methylthio-N(6)-dimethylallyladenosine synthase 2"/>
    <property type="match status" value="1"/>
</dbReference>
<dbReference type="Gene3D" id="3.40.50.12160">
    <property type="entry name" value="Methylthiotransferase, N-terminal domain"/>
    <property type="match status" value="1"/>
</dbReference>
<dbReference type="Gene3D" id="3.80.30.20">
    <property type="entry name" value="tm_1862 like domain"/>
    <property type="match status" value="1"/>
</dbReference>
<dbReference type="HAMAP" id="MF_01864">
    <property type="entry name" value="tRNA_metthiotr_MiaB"/>
    <property type="match status" value="1"/>
</dbReference>
<dbReference type="InterPro" id="IPR006638">
    <property type="entry name" value="Elp3/MiaA/NifB-like_rSAM"/>
</dbReference>
<dbReference type="InterPro" id="IPR005839">
    <property type="entry name" value="Methylthiotransferase"/>
</dbReference>
<dbReference type="InterPro" id="IPR020612">
    <property type="entry name" value="Methylthiotransferase_CS"/>
</dbReference>
<dbReference type="InterPro" id="IPR013848">
    <property type="entry name" value="Methylthiotransferase_N"/>
</dbReference>
<dbReference type="InterPro" id="IPR038135">
    <property type="entry name" value="Methylthiotransferase_N_sf"/>
</dbReference>
<dbReference type="InterPro" id="IPR006463">
    <property type="entry name" value="MiaB_methiolase"/>
</dbReference>
<dbReference type="InterPro" id="IPR007197">
    <property type="entry name" value="rSAM"/>
</dbReference>
<dbReference type="InterPro" id="IPR023404">
    <property type="entry name" value="rSAM_horseshoe"/>
</dbReference>
<dbReference type="InterPro" id="IPR002792">
    <property type="entry name" value="TRAM_dom"/>
</dbReference>
<dbReference type="NCBIfam" id="TIGR01574">
    <property type="entry name" value="miaB-methiolase"/>
    <property type="match status" value="1"/>
</dbReference>
<dbReference type="NCBIfam" id="TIGR00089">
    <property type="entry name" value="MiaB/RimO family radical SAM methylthiotransferase"/>
    <property type="match status" value="1"/>
</dbReference>
<dbReference type="PANTHER" id="PTHR43020">
    <property type="entry name" value="CDK5 REGULATORY SUBUNIT-ASSOCIATED PROTEIN 1"/>
    <property type="match status" value="1"/>
</dbReference>
<dbReference type="PANTHER" id="PTHR43020:SF2">
    <property type="entry name" value="MITOCHONDRIAL TRNA METHYLTHIOTRANSFERASE CDK5RAP1"/>
    <property type="match status" value="1"/>
</dbReference>
<dbReference type="Pfam" id="PF04055">
    <property type="entry name" value="Radical_SAM"/>
    <property type="match status" value="1"/>
</dbReference>
<dbReference type="Pfam" id="PF01938">
    <property type="entry name" value="TRAM"/>
    <property type="match status" value="1"/>
</dbReference>
<dbReference type="Pfam" id="PF00919">
    <property type="entry name" value="UPF0004"/>
    <property type="match status" value="1"/>
</dbReference>
<dbReference type="SFLD" id="SFLDF00273">
    <property type="entry name" value="(dimethylallyl)adenosine_tRNA"/>
    <property type="match status" value="1"/>
</dbReference>
<dbReference type="SFLD" id="SFLDG01082">
    <property type="entry name" value="B12-binding_domain_containing"/>
    <property type="match status" value="1"/>
</dbReference>
<dbReference type="SFLD" id="SFLDS00029">
    <property type="entry name" value="Radical_SAM"/>
    <property type="match status" value="1"/>
</dbReference>
<dbReference type="SMART" id="SM00729">
    <property type="entry name" value="Elp3"/>
    <property type="match status" value="1"/>
</dbReference>
<dbReference type="SUPFAM" id="SSF102114">
    <property type="entry name" value="Radical SAM enzymes"/>
    <property type="match status" value="1"/>
</dbReference>
<dbReference type="PROSITE" id="PS51449">
    <property type="entry name" value="MTTASE_N"/>
    <property type="match status" value="1"/>
</dbReference>
<dbReference type="PROSITE" id="PS01278">
    <property type="entry name" value="MTTASE_RADICAL"/>
    <property type="match status" value="1"/>
</dbReference>
<dbReference type="PROSITE" id="PS51918">
    <property type="entry name" value="RADICAL_SAM"/>
    <property type="match status" value="1"/>
</dbReference>
<dbReference type="PROSITE" id="PS50926">
    <property type="entry name" value="TRAM"/>
    <property type="match status" value="1"/>
</dbReference>
<feature type="chain" id="PRO_0000374650" description="tRNA-2-methylthio-N(6)-dimethylallyladenosine synthase">
    <location>
        <begin position="1"/>
        <end position="497"/>
    </location>
</feature>
<feature type="domain" description="MTTase N-terminal" evidence="1">
    <location>
        <begin position="48"/>
        <end position="165"/>
    </location>
</feature>
<feature type="domain" description="Radical SAM core" evidence="2">
    <location>
        <begin position="188"/>
        <end position="430"/>
    </location>
</feature>
<feature type="domain" description="TRAM" evidence="1">
    <location>
        <begin position="433"/>
        <end position="496"/>
    </location>
</feature>
<feature type="region of interest" description="Disordered" evidence="3">
    <location>
        <begin position="1"/>
        <end position="50"/>
    </location>
</feature>
<feature type="binding site" evidence="1">
    <location>
        <position position="57"/>
    </location>
    <ligand>
        <name>[4Fe-4S] cluster</name>
        <dbReference type="ChEBI" id="CHEBI:49883"/>
        <label>1</label>
    </ligand>
</feature>
<feature type="binding site" evidence="1">
    <location>
        <position position="94"/>
    </location>
    <ligand>
        <name>[4Fe-4S] cluster</name>
        <dbReference type="ChEBI" id="CHEBI:49883"/>
        <label>1</label>
    </ligand>
</feature>
<feature type="binding site" evidence="1">
    <location>
        <position position="128"/>
    </location>
    <ligand>
        <name>[4Fe-4S] cluster</name>
        <dbReference type="ChEBI" id="CHEBI:49883"/>
        <label>1</label>
    </ligand>
</feature>
<feature type="binding site" evidence="1">
    <location>
        <position position="202"/>
    </location>
    <ligand>
        <name>[4Fe-4S] cluster</name>
        <dbReference type="ChEBI" id="CHEBI:49883"/>
        <label>2</label>
        <note>4Fe-4S-S-AdoMet</note>
    </ligand>
</feature>
<feature type="binding site" evidence="1">
    <location>
        <position position="206"/>
    </location>
    <ligand>
        <name>[4Fe-4S] cluster</name>
        <dbReference type="ChEBI" id="CHEBI:49883"/>
        <label>2</label>
        <note>4Fe-4S-S-AdoMet</note>
    </ligand>
</feature>
<feature type="binding site" evidence="1">
    <location>
        <position position="209"/>
    </location>
    <ligand>
        <name>[4Fe-4S] cluster</name>
        <dbReference type="ChEBI" id="CHEBI:49883"/>
        <label>2</label>
        <note>4Fe-4S-S-AdoMet</note>
    </ligand>
</feature>
<keyword id="KW-0004">4Fe-4S</keyword>
<keyword id="KW-0963">Cytoplasm</keyword>
<keyword id="KW-0408">Iron</keyword>
<keyword id="KW-0411">Iron-sulfur</keyword>
<keyword id="KW-0479">Metal-binding</keyword>
<keyword id="KW-0949">S-adenosyl-L-methionine</keyword>
<keyword id="KW-0808">Transferase</keyword>
<keyword id="KW-0819">tRNA processing</keyword>
<accession>Q9PEX2</accession>